<accession>B7NQA9</accession>
<name>MDTD_ECO7I</name>
<feature type="chain" id="PRO_1000200776" description="Putative multidrug resistance protein MdtD">
    <location>
        <begin position="1"/>
        <end position="471"/>
    </location>
</feature>
<feature type="topological domain" description="Periplasmic" evidence="1">
    <location>
        <begin position="1"/>
        <end position="11"/>
    </location>
</feature>
<feature type="transmembrane region" description="Helical" evidence="1">
    <location>
        <begin position="12"/>
        <end position="32"/>
    </location>
</feature>
<feature type="topological domain" description="Cytoplasmic" evidence="1">
    <location>
        <begin position="33"/>
        <end position="48"/>
    </location>
</feature>
<feature type="transmembrane region" description="Helical" evidence="1">
    <location>
        <begin position="49"/>
        <end position="69"/>
    </location>
</feature>
<feature type="topological domain" description="Periplasmic" evidence="1">
    <location>
        <begin position="70"/>
        <end position="76"/>
    </location>
</feature>
<feature type="transmembrane region" description="Helical" evidence="1">
    <location>
        <begin position="77"/>
        <end position="97"/>
    </location>
</feature>
<feature type="topological domain" description="Cytoplasmic" evidence="1">
    <location>
        <begin position="98"/>
        <end position="101"/>
    </location>
</feature>
<feature type="transmembrane region" description="Helical" evidence="1">
    <location>
        <begin position="102"/>
        <end position="124"/>
    </location>
</feature>
<feature type="topological domain" description="Periplasmic" evidence="1">
    <location>
        <begin position="125"/>
        <end position="137"/>
    </location>
</feature>
<feature type="transmembrane region" description="Helical" evidence="1">
    <location>
        <begin position="138"/>
        <end position="158"/>
    </location>
</feature>
<feature type="topological domain" description="Cytoplasmic" evidence="1">
    <location>
        <begin position="159"/>
        <end position="164"/>
    </location>
</feature>
<feature type="transmembrane region" description="Helical" evidence="1">
    <location>
        <begin position="165"/>
        <end position="185"/>
    </location>
</feature>
<feature type="topological domain" description="Periplasmic" evidence="1">
    <location>
        <begin position="186"/>
        <end position="196"/>
    </location>
</feature>
<feature type="transmembrane region" description="Helical" evidence="1">
    <location>
        <begin position="197"/>
        <end position="217"/>
    </location>
</feature>
<feature type="topological domain" description="Cytoplasmic" evidence="1">
    <location>
        <begin position="218"/>
        <end position="224"/>
    </location>
</feature>
<feature type="transmembrane region" description="Helical" evidence="1">
    <location>
        <begin position="225"/>
        <end position="245"/>
    </location>
</feature>
<feature type="topological domain" description="Periplasmic" evidence="1">
    <location>
        <begin position="246"/>
        <end position="262"/>
    </location>
</feature>
<feature type="transmembrane region" description="Helical" evidence="1">
    <location>
        <begin position="263"/>
        <end position="283"/>
    </location>
</feature>
<feature type="topological domain" description="Cytoplasmic" evidence="1">
    <location>
        <begin position="284"/>
        <end position="285"/>
    </location>
</feature>
<feature type="transmembrane region" description="Helical" evidence="1">
    <location>
        <begin position="286"/>
        <end position="306"/>
    </location>
</feature>
<feature type="topological domain" description="Periplasmic" evidence="1">
    <location>
        <begin position="307"/>
        <end position="341"/>
    </location>
</feature>
<feature type="transmembrane region" description="Helical" evidence="1">
    <location>
        <begin position="342"/>
        <end position="362"/>
    </location>
</feature>
<feature type="topological domain" description="Cytoplasmic" evidence="1">
    <location>
        <begin position="363"/>
        <end position="395"/>
    </location>
</feature>
<feature type="transmembrane region" description="Helical" evidence="1">
    <location>
        <begin position="396"/>
        <end position="416"/>
    </location>
</feature>
<feature type="topological domain" description="Periplasmic" evidence="1">
    <location>
        <begin position="417"/>
        <end position="430"/>
    </location>
</feature>
<feature type="transmembrane region" description="Helical" evidence="1">
    <location>
        <begin position="431"/>
        <end position="451"/>
    </location>
</feature>
<feature type="topological domain" description="Cytoplasmic" evidence="1">
    <location>
        <begin position="452"/>
        <end position="471"/>
    </location>
</feature>
<dbReference type="EMBL" id="CU928164">
    <property type="protein sequence ID" value="CAR17074.1"/>
    <property type="molecule type" value="Genomic_DNA"/>
</dbReference>
<dbReference type="RefSeq" id="WP_000130878.1">
    <property type="nucleotide sequence ID" value="NC_011750.1"/>
</dbReference>
<dbReference type="RefSeq" id="YP_002406959.1">
    <property type="nucleotide sequence ID" value="NC_011750.1"/>
</dbReference>
<dbReference type="SMR" id="B7NQA9"/>
<dbReference type="STRING" id="585057.ECIAI39_0937"/>
<dbReference type="KEGG" id="ect:ECIAI39_0937"/>
<dbReference type="PATRIC" id="fig|585057.6.peg.987"/>
<dbReference type="HOGENOM" id="CLU_000960_28_0_6"/>
<dbReference type="Proteomes" id="UP000000749">
    <property type="component" value="Chromosome"/>
</dbReference>
<dbReference type="GO" id="GO:0005886">
    <property type="term" value="C:plasma membrane"/>
    <property type="evidence" value="ECO:0007669"/>
    <property type="project" value="UniProtKB-SubCell"/>
</dbReference>
<dbReference type="GO" id="GO:0022857">
    <property type="term" value="F:transmembrane transporter activity"/>
    <property type="evidence" value="ECO:0007669"/>
    <property type="project" value="UniProtKB-UniRule"/>
</dbReference>
<dbReference type="CDD" id="cd17503">
    <property type="entry name" value="MFS_LmrB_MDR_like"/>
    <property type="match status" value="1"/>
</dbReference>
<dbReference type="FunFam" id="1.20.1250.20:FF:000021">
    <property type="entry name" value="Putative multidrug resistance protein MdtD"/>
    <property type="match status" value="1"/>
</dbReference>
<dbReference type="FunFam" id="1.20.1720.10:FF:000001">
    <property type="entry name" value="Putative multidrug resistance protein MdtD"/>
    <property type="match status" value="1"/>
</dbReference>
<dbReference type="Gene3D" id="1.20.1250.20">
    <property type="entry name" value="MFS general substrate transporter like domains"/>
    <property type="match status" value="1"/>
</dbReference>
<dbReference type="Gene3D" id="1.20.1720.10">
    <property type="entry name" value="Multidrug resistance protein D"/>
    <property type="match status" value="1"/>
</dbReference>
<dbReference type="HAMAP" id="MF_01577">
    <property type="entry name" value="MFS_MdtD"/>
    <property type="match status" value="1"/>
</dbReference>
<dbReference type="InterPro" id="IPR004638">
    <property type="entry name" value="EmrB-like"/>
</dbReference>
<dbReference type="InterPro" id="IPR011701">
    <property type="entry name" value="MFS"/>
</dbReference>
<dbReference type="InterPro" id="IPR020846">
    <property type="entry name" value="MFS_dom"/>
</dbReference>
<dbReference type="InterPro" id="IPR036259">
    <property type="entry name" value="MFS_trans_sf"/>
</dbReference>
<dbReference type="InterPro" id="IPR023721">
    <property type="entry name" value="Multi-R_MdtD"/>
</dbReference>
<dbReference type="NCBIfam" id="TIGR00711">
    <property type="entry name" value="efflux_EmrB"/>
    <property type="match status" value="1"/>
</dbReference>
<dbReference type="NCBIfam" id="NF007799">
    <property type="entry name" value="PRK10504.1"/>
    <property type="match status" value="1"/>
</dbReference>
<dbReference type="PANTHER" id="PTHR42718:SF46">
    <property type="entry name" value="BLR6921 PROTEIN"/>
    <property type="match status" value="1"/>
</dbReference>
<dbReference type="PANTHER" id="PTHR42718">
    <property type="entry name" value="MAJOR FACILITATOR SUPERFAMILY MULTIDRUG TRANSPORTER MFSC"/>
    <property type="match status" value="1"/>
</dbReference>
<dbReference type="Pfam" id="PF07690">
    <property type="entry name" value="MFS_1"/>
    <property type="match status" value="1"/>
</dbReference>
<dbReference type="PRINTS" id="PR01036">
    <property type="entry name" value="TCRTETB"/>
</dbReference>
<dbReference type="SUPFAM" id="SSF103473">
    <property type="entry name" value="MFS general substrate transporter"/>
    <property type="match status" value="1"/>
</dbReference>
<dbReference type="PROSITE" id="PS50850">
    <property type="entry name" value="MFS"/>
    <property type="match status" value="1"/>
</dbReference>
<evidence type="ECO:0000255" key="1">
    <source>
        <dbReference type="HAMAP-Rule" id="MF_01577"/>
    </source>
</evidence>
<sequence>MTDLPDSTRWQLWIVAFGFFMQSLDTTIVNTALPSMAQSLGESPLHMHMVIVSYVLTVAVMLPASGWLADKVGVRNIFFTAIVLFTLGSLFCALSGTLNELLLARALQGVGGAMMVPVGRLTVMKIVPREQYMAAMTFVTLPGQVGPLLGPALGGLLVEYASWHWIFLINIPVGIIGAIATLMLMPNYTMQTRRFDLSGFLLLAVGMAVLTLALDGSKGTGLSPLAIAGLVAVGVVALVLYLLHARNNNRALFSLKLFRTRTFSLGLAGSFAGRIGSGMLPFMTPVFLQIGLGFSPFHAGLMMIPMVLGSMGMKRIVVQVVNRFGYRRVLVATTLGLSLVTMLFMTTALLGWYYVLPFVLFLQGMVNSTRFSSMNTLTLKDLPDNLASSGNSLLSMIMQLSMSIGVTIAGLLLGLFGSQHVSVDSGTTQTVFMYTWLSMAFIIALPAFIFARVPNDTHQNVAISRRKRSAQ</sequence>
<organism>
    <name type="scientific">Escherichia coli O7:K1 (strain IAI39 / ExPEC)</name>
    <dbReference type="NCBI Taxonomy" id="585057"/>
    <lineage>
        <taxon>Bacteria</taxon>
        <taxon>Pseudomonadati</taxon>
        <taxon>Pseudomonadota</taxon>
        <taxon>Gammaproteobacteria</taxon>
        <taxon>Enterobacterales</taxon>
        <taxon>Enterobacteriaceae</taxon>
        <taxon>Escherichia</taxon>
    </lineage>
</organism>
<comment type="subcellular location">
    <subcellularLocation>
        <location evidence="1">Cell inner membrane</location>
        <topology evidence="1">Multi-pass membrane protein</topology>
    </subcellularLocation>
</comment>
<comment type="similarity">
    <text evidence="1">Belongs to the major facilitator superfamily. TCR/Tet family.</text>
</comment>
<keyword id="KW-0997">Cell inner membrane</keyword>
<keyword id="KW-1003">Cell membrane</keyword>
<keyword id="KW-0472">Membrane</keyword>
<keyword id="KW-0812">Transmembrane</keyword>
<keyword id="KW-1133">Transmembrane helix</keyword>
<keyword id="KW-0813">Transport</keyword>
<reference key="1">
    <citation type="journal article" date="2009" name="PLoS Genet.">
        <title>Organised genome dynamics in the Escherichia coli species results in highly diverse adaptive paths.</title>
        <authorList>
            <person name="Touchon M."/>
            <person name="Hoede C."/>
            <person name="Tenaillon O."/>
            <person name="Barbe V."/>
            <person name="Baeriswyl S."/>
            <person name="Bidet P."/>
            <person name="Bingen E."/>
            <person name="Bonacorsi S."/>
            <person name="Bouchier C."/>
            <person name="Bouvet O."/>
            <person name="Calteau A."/>
            <person name="Chiapello H."/>
            <person name="Clermont O."/>
            <person name="Cruveiller S."/>
            <person name="Danchin A."/>
            <person name="Diard M."/>
            <person name="Dossat C."/>
            <person name="Karoui M.E."/>
            <person name="Frapy E."/>
            <person name="Garry L."/>
            <person name="Ghigo J.M."/>
            <person name="Gilles A.M."/>
            <person name="Johnson J."/>
            <person name="Le Bouguenec C."/>
            <person name="Lescat M."/>
            <person name="Mangenot S."/>
            <person name="Martinez-Jehanne V."/>
            <person name="Matic I."/>
            <person name="Nassif X."/>
            <person name="Oztas S."/>
            <person name="Petit M.A."/>
            <person name="Pichon C."/>
            <person name="Rouy Z."/>
            <person name="Ruf C.S."/>
            <person name="Schneider D."/>
            <person name="Tourret J."/>
            <person name="Vacherie B."/>
            <person name="Vallenet D."/>
            <person name="Medigue C."/>
            <person name="Rocha E.P.C."/>
            <person name="Denamur E."/>
        </authorList>
    </citation>
    <scope>NUCLEOTIDE SEQUENCE [LARGE SCALE GENOMIC DNA]</scope>
    <source>
        <strain>IAI39 / ExPEC</strain>
    </source>
</reference>
<gene>
    <name evidence="1" type="primary">mdtD</name>
    <name type="ordered locus">ECIAI39_0937</name>
</gene>
<proteinExistence type="inferred from homology"/>
<protein>
    <recommendedName>
        <fullName evidence="1">Putative multidrug resistance protein MdtD</fullName>
    </recommendedName>
</protein>